<reference key="1">
    <citation type="journal article" date="1995" name="Proc. R. Soc. B">
        <title>Molecular phylogeny and evolution of marsupial protamine P1 genes.</title>
        <authorList>
            <person name="Retief J.D."/>
            <person name="Krajewski C."/>
            <person name="Westerman M."/>
            <person name="Winkfein R.J."/>
            <person name="Dixon G.H."/>
        </authorList>
    </citation>
    <scope>NUCLEOTIDE SEQUENCE [GENOMIC DNA]</scope>
    <source>
        <tissue>Sperm</tissue>
    </source>
</reference>
<sequence>MARYRHSRSRSRSRYRRRRRRRSRYRSRRRRYRGRRRRRSRRGRRRRGYSRRRYSRRRRRRY</sequence>
<protein>
    <recommendedName>
        <fullName>Sperm protamine P1</fullName>
    </recommendedName>
</protein>
<proteinExistence type="evidence at transcript level"/>
<name>HSP1_WALBI</name>
<keyword id="KW-0158">Chromosome</keyword>
<keyword id="KW-0217">Developmental protein</keyword>
<keyword id="KW-0221">Differentiation</keyword>
<keyword id="KW-0226">DNA condensation</keyword>
<keyword id="KW-0238">DNA-binding</keyword>
<keyword id="KW-0544">Nucleosome core</keyword>
<keyword id="KW-0539">Nucleus</keyword>
<keyword id="KW-0744">Spermatogenesis</keyword>
<feature type="chain" id="PRO_0000191588" description="Sperm protamine P1">
    <location>
        <begin position="1"/>
        <end position="62"/>
    </location>
</feature>
<feature type="region of interest" description="Disordered" evidence="1">
    <location>
        <begin position="1"/>
        <end position="62"/>
    </location>
</feature>
<comment type="function">
    <text>Protamines substitute for histones in the chromatin of sperm during the haploid phase of spermatogenesis. They compact sperm DNA into a highly condensed, stable and inactive complex.</text>
</comment>
<comment type="subcellular location">
    <subcellularLocation>
        <location>Nucleus</location>
    </subcellularLocation>
    <subcellularLocation>
        <location>Chromosome</location>
    </subcellularLocation>
</comment>
<comment type="tissue specificity">
    <text>Testis.</text>
</comment>
<comment type="similarity">
    <text evidence="2">Belongs to the protamine P1 family.</text>
</comment>
<accession>P67843</accession>
<accession>P42141</accession>
<accession>P42153</accession>
<evidence type="ECO:0000256" key="1">
    <source>
        <dbReference type="SAM" id="MobiDB-lite"/>
    </source>
</evidence>
<evidence type="ECO:0000305" key="2"/>
<organism>
    <name type="scientific">Wallabia bicolor</name>
    <name type="common">Swamp wallaby</name>
    <dbReference type="NCBI Taxonomy" id="9330"/>
    <lineage>
        <taxon>Eukaryota</taxon>
        <taxon>Metazoa</taxon>
        <taxon>Chordata</taxon>
        <taxon>Craniata</taxon>
        <taxon>Vertebrata</taxon>
        <taxon>Euteleostomi</taxon>
        <taxon>Mammalia</taxon>
        <taxon>Metatheria</taxon>
        <taxon>Diprotodontia</taxon>
        <taxon>Macropodidae</taxon>
        <taxon>Wallabia</taxon>
    </lineage>
</organism>
<dbReference type="EMBL" id="L35328">
    <property type="protein sequence ID" value="AAA74609.1"/>
    <property type="molecule type" value="Genomic_DNA"/>
</dbReference>
<dbReference type="GO" id="GO:0000786">
    <property type="term" value="C:nucleosome"/>
    <property type="evidence" value="ECO:0007669"/>
    <property type="project" value="UniProtKB-KW"/>
</dbReference>
<dbReference type="GO" id="GO:0005634">
    <property type="term" value="C:nucleus"/>
    <property type="evidence" value="ECO:0007669"/>
    <property type="project" value="UniProtKB-SubCell"/>
</dbReference>
<dbReference type="GO" id="GO:0003677">
    <property type="term" value="F:DNA binding"/>
    <property type="evidence" value="ECO:0007669"/>
    <property type="project" value="UniProtKB-KW"/>
</dbReference>
<dbReference type="GO" id="GO:0030261">
    <property type="term" value="P:chromosome condensation"/>
    <property type="evidence" value="ECO:0007669"/>
    <property type="project" value="UniProtKB-KW"/>
</dbReference>
<dbReference type="GO" id="GO:0035092">
    <property type="term" value="P:sperm DNA condensation"/>
    <property type="evidence" value="ECO:0007669"/>
    <property type="project" value="InterPro"/>
</dbReference>
<dbReference type="InterPro" id="IPR000221">
    <property type="entry name" value="Protamine_P1"/>
</dbReference>
<dbReference type="PROSITE" id="PS00048">
    <property type="entry name" value="PROTAMINE_P1"/>
    <property type="match status" value="1"/>
</dbReference>
<gene>
    <name type="primary">PRM1</name>
</gene>